<dbReference type="EC" id="2.3.1.286" evidence="4"/>
<dbReference type="EMBL" id="AF283757">
    <property type="protein sequence ID" value="AAG44850.1"/>
    <property type="molecule type" value="mRNA"/>
</dbReference>
<dbReference type="EMBL" id="AB009050">
    <property type="protein sequence ID" value="BAB09243.1"/>
    <property type="molecule type" value="Genomic_DNA"/>
</dbReference>
<dbReference type="EMBL" id="CP002688">
    <property type="protein sequence ID" value="AED96677.1"/>
    <property type="molecule type" value="Genomic_DNA"/>
</dbReference>
<dbReference type="EMBL" id="BT008767">
    <property type="protein sequence ID" value="AAP68206.1"/>
    <property type="molecule type" value="mRNA"/>
</dbReference>
<dbReference type="EMBL" id="AK227432">
    <property type="protein sequence ID" value="BAE99436.1"/>
    <property type="molecule type" value="mRNA"/>
</dbReference>
<dbReference type="RefSeq" id="NP_200387.1">
    <property type="nucleotide sequence ID" value="NM_124958.3"/>
</dbReference>
<dbReference type="SMR" id="Q9FE17"/>
<dbReference type="BioGRID" id="20914">
    <property type="interactions" value="1"/>
</dbReference>
<dbReference type="FunCoup" id="Q9FE17">
    <property type="interactions" value="3019"/>
</dbReference>
<dbReference type="STRING" id="3702.Q9FE17"/>
<dbReference type="iPTMnet" id="Q9FE17"/>
<dbReference type="PaxDb" id="3702-AT5G55760.1"/>
<dbReference type="ProteomicsDB" id="234564"/>
<dbReference type="EnsemblPlants" id="AT5G55760.1">
    <property type="protein sequence ID" value="AT5G55760.1"/>
    <property type="gene ID" value="AT5G55760"/>
</dbReference>
<dbReference type="GeneID" id="835670"/>
<dbReference type="Gramene" id="AT5G55760.1">
    <property type="protein sequence ID" value="AT5G55760.1"/>
    <property type="gene ID" value="AT5G55760"/>
</dbReference>
<dbReference type="KEGG" id="ath:AT5G55760"/>
<dbReference type="Araport" id="AT5G55760"/>
<dbReference type="TAIR" id="AT5G55760">
    <property type="gene designation" value="SRT1"/>
</dbReference>
<dbReference type="eggNOG" id="KOG1905">
    <property type="taxonomic scope" value="Eukaryota"/>
</dbReference>
<dbReference type="HOGENOM" id="CLU_023643_6_4_1"/>
<dbReference type="InParanoid" id="Q9FE17"/>
<dbReference type="OMA" id="YMMNLRI"/>
<dbReference type="OrthoDB" id="424302at2759"/>
<dbReference type="PhylomeDB" id="Q9FE17"/>
<dbReference type="PRO" id="PR:Q9FE17"/>
<dbReference type="Proteomes" id="UP000006548">
    <property type="component" value="Chromosome 5"/>
</dbReference>
<dbReference type="ExpressionAtlas" id="Q9FE17">
    <property type="expression patterns" value="baseline and differential"/>
</dbReference>
<dbReference type="GO" id="GO:0005634">
    <property type="term" value="C:nucleus"/>
    <property type="evidence" value="ECO:0000314"/>
    <property type="project" value="TAIR"/>
</dbReference>
<dbReference type="GO" id="GO:0031490">
    <property type="term" value="F:chromatin DNA binding"/>
    <property type="evidence" value="ECO:0000314"/>
    <property type="project" value="TAIR"/>
</dbReference>
<dbReference type="GO" id="GO:0046872">
    <property type="term" value="F:metal ion binding"/>
    <property type="evidence" value="ECO:0007669"/>
    <property type="project" value="UniProtKB-KW"/>
</dbReference>
<dbReference type="GO" id="GO:0070403">
    <property type="term" value="F:NAD+ binding"/>
    <property type="evidence" value="ECO:0007669"/>
    <property type="project" value="InterPro"/>
</dbReference>
<dbReference type="GO" id="GO:0034979">
    <property type="term" value="F:NAD-dependent protein lysine deacetylase activity"/>
    <property type="evidence" value="ECO:0007669"/>
    <property type="project" value="UniProtKB-EC"/>
</dbReference>
<dbReference type="GO" id="GO:0009873">
    <property type="term" value="P:ethylene-activated signaling pathway"/>
    <property type="evidence" value="ECO:0000316"/>
    <property type="project" value="TAIR"/>
</dbReference>
<dbReference type="CDD" id="cd01410">
    <property type="entry name" value="SIRT7"/>
    <property type="match status" value="1"/>
</dbReference>
<dbReference type="FunFam" id="3.40.50.1220:FF:000038">
    <property type="entry name" value="NAD-dependent protein deacetylase sirtuin-6 isoform X2"/>
    <property type="match status" value="1"/>
</dbReference>
<dbReference type="FunFam" id="2.20.28.200:FF:000003">
    <property type="entry name" value="NAD-dependent protein deacetylase SRT1"/>
    <property type="match status" value="1"/>
</dbReference>
<dbReference type="Gene3D" id="2.20.28.200">
    <property type="match status" value="1"/>
</dbReference>
<dbReference type="Gene3D" id="3.40.50.1220">
    <property type="entry name" value="TPP-binding domain"/>
    <property type="match status" value="1"/>
</dbReference>
<dbReference type="InterPro" id="IPR029035">
    <property type="entry name" value="DHS-like_NAD/FAD-binding_dom"/>
</dbReference>
<dbReference type="InterPro" id="IPR050134">
    <property type="entry name" value="NAD-dep_sirtuin_deacylases"/>
</dbReference>
<dbReference type="InterPro" id="IPR003000">
    <property type="entry name" value="Sirtuin"/>
</dbReference>
<dbReference type="InterPro" id="IPR026590">
    <property type="entry name" value="Ssirtuin_cat_dom"/>
</dbReference>
<dbReference type="PANTHER" id="PTHR11085">
    <property type="entry name" value="NAD-DEPENDENT PROTEIN DEACYLASE SIRTUIN-5, MITOCHONDRIAL-RELATED"/>
    <property type="match status" value="1"/>
</dbReference>
<dbReference type="PANTHER" id="PTHR11085:SF12">
    <property type="entry name" value="NAD-DEPENDENT PROTEIN DEACYLASE SIRTUIN-6"/>
    <property type="match status" value="1"/>
</dbReference>
<dbReference type="Pfam" id="PF02146">
    <property type="entry name" value="SIR2"/>
    <property type="match status" value="1"/>
</dbReference>
<dbReference type="SUPFAM" id="SSF52467">
    <property type="entry name" value="DHS-like NAD/FAD-binding domain"/>
    <property type="match status" value="1"/>
</dbReference>
<dbReference type="PROSITE" id="PS50305">
    <property type="entry name" value="SIRTUIN"/>
    <property type="match status" value="1"/>
</dbReference>
<organism>
    <name type="scientific">Arabidopsis thaliana</name>
    <name type="common">Mouse-ear cress</name>
    <dbReference type="NCBI Taxonomy" id="3702"/>
    <lineage>
        <taxon>Eukaryota</taxon>
        <taxon>Viridiplantae</taxon>
        <taxon>Streptophyta</taxon>
        <taxon>Embryophyta</taxon>
        <taxon>Tracheophyta</taxon>
        <taxon>Spermatophyta</taxon>
        <taxon>Magnoliopsida</taxon>
        <taxon>eudicotyledons</taxon>
        <taxon>Gunneridae</taxon>
        <taxon>Pentapetalae</taxon>
        <taxon>rosids</taxon>
        <taxon>malvids</taxon>
        <taxon>Brassicales</taxon>
        <taxon>Brassicaceae</taxon>
        <taxon>Camelineae</taxon>
        <taxon>Arabidopsis</taxon>
    </lineage>
</organism>
<name>SIR1_ARATH</name>
<protein>
    <recommendedName>
        <fullName evidence="7">NAD-dependent protein deacetylase SRT1</fullName>
        <ecNumber evidence="4">2.3.1.286</ecNumber>
    </recommendedName>
    <alternativeName>
        <fullName evidence="7">Regulatory protein SIR2 homolog 1</fullName>
    </alternativeName>
    <alternativeName>
        <fullName evidence="7">SIR2-like protein 1</fullName>
    </alternativeName>
</protein>
<evidence type="ECO:0000250" key="1">
    <source>
        <dbReference type="UniProtKB" id="P59941"/>
    </source>
</evidence>
<evidence type="ECO:0000250" key="2">
    <source>
        <dbReference type="UniProtKB" id="Q94AQ6"/>
    </source>
</evidence>
<evidence type="ECO:0000250" key="3">
    <source>
        <dbReference type="UniProtKB" id="Q9NXA8"/>
    </source>
</evidence>
<evidence type="ECO:0000255" key="4">
    <source>
        <dbReference type="PROSITE-ProRule" id="PRU00236"/>
    </source>
</evidence>
<evidence type="ECO:0000256" key="5">
    <source>
        <dbReference type="SAM" id="MobiDB-lite"/>
    </source>
</evidence>
<evidence type="ECO:0000269" key="6">
    <source>
    </source>
</evidence>
<evidence type="ECO:0000303" key="7">
    <source ref="1"/>
</evidence>
<evidence type="ECO:0000305" key="8"/>
<evidence type="ECO:0000312" key="9">
    <source>
        <dbReference type="Araport" id="AT5G55760"/>
    </source>
</evidence>
<evidence type="ECO:0000312" key="10">
    <source>
        <dbReference type="EMBL" id="BAB09243.1"/>
    </source>
</evidence>
<accession>Q9FE17</accession>
<accession>Q7Y032</accession>
<gene>
    <name evidence="7" type="primary">SRT1</name>
    <name evidence="9" type="ordered locus">At5g55760</name>
    <name evidence="10" type="ORF">MDF20.20</name>
</gene>
<proteinExistence type="evidence at protein level"/>
<keyword id="KW-0936">Ethylene signaling pathway</keyword>
<keyword id="KW-0479">Metal-binding</keyword>
<keyword id="KW-0520">NAD</keyword>
<keyword id="KW-0539">Nucleus</keyword>
<keyword id="KW-1185">Reference proteome</keyword>
<keyword id="KW-0808">Transferase</keyword>
<keyword id="KW-0862">Zinc</keyword>
<sequence>MSLGYAEKLSFIEDVGQVGMAEFFDPSHLLQCKIEELAKLIQKSKHLVVFTGAGISTSCGIPDFRGPKGIWTLQREGKDLPKASLPFHRAMPSMTHMALVELERAGILKFVISQNVDGLHLRSGIPREKLSELHGDSFMEMCPSCGAEYLRDFEVETIGLKETSRKCSVEKCGAKLKDTVLDWEDALPPKEIDPAEKHCKKADLVLCLGTSLQITPACNLPLKCLKGGGKIVIVNLQKTPKDKKANVVIHGLVDKVVAGVMESLNMKIPPYVRIDLFQIILTQSISGDQRFINWTLRVASVHGLTSQLPFIKSIEVSFSDNHNYKDAVLDKQPFLMKRRTARNETFDIFFKVNYSDGCDCVSTQLSLPFEFKISTEEHVEIIDKEAVLQSLREKAVEESSCGQSGVVERRVVSEPRSEAVVYATVTSLRTYHSQQSLLANGDLKWKLEGSGTSRKRSRTGKRKSKALAEETKA</sequence>
<feature type="chain" id="PRO_0000417365" description="NAD-dependent protein deacetylase SRT1">
    <location>
        <begin position="1"/>
        <end position="473"/>
    </location>
</feature>
<feature type="domain" description="Deacetylase sirtuin-type" evidence="4">
    <location>
        <begin position="27"/>
        <end position="267"/>
    </location>
</feature>
<feature type="region of interest" description="Disordered" evidence="5">
    <location>
        <begin position="447"/>
        <end position="473"/>
    </location>
</feature>
<feature type="compositionally biased region" description="Basic residues" evidence="5">
    <location>
        <begin position="453"/>
        <end position="465"/>
    </location>
</feature>
<feature type="active site" description="Proton acceptor" evidence="4">
    <location>
        <position position="134"/>
    </location>
</feature>
<feature type="binding site" evidence="3">
    <location>
        <begin position="52"/>
        <end position="71"/>
    </location>
    <ligand>
        <name>NAD(+)</name>
        <dbReference type="ChEBI" id="CHEBI:57540"/>
    </ligand>
</feature>
<feature type="binding site" evidence="3">
    <location>
        <begin position="114"/>
        <end position="117"/>
    </location>
    <ligand>
        <name>NAD(+)</name>
        <dbReference type="ChEBI" id="CHEBI:57540"/>
    </ligand>
</feature>
<feature type="binding site" evidence="4">
    <location>
        <position position="142"/>
    </location>
    <ligand>
        <name>Zn(2+)</name>
        <dbReference type="ChEBI" id="CHEBI:29105"/>
    </ligand>
</feature>
<feature type="binding site" evidence="4">
    <location>
        <position position="145"/>
    </location>
    <ligand>
        <name>Zn(2+)</name>
        <dbReference type="ChEBI" id="CHEBI:29105"/>
    </ligand>
</feature>
<feature type="binding site" evidence="4">
    <location>
        <position position="167"/>
    </location>
    <ligand>
        <name>Zn(2+)</name>
        <dbReference type="ChEBI" id="CHEBI:29105"/>
    </ligand>
</feature>
<feature type="binding site" evidence="4">
    <location>
        <position position="172"/>
    </location>
    <ligand>
        <name>Zn(2+)</name>
        <dbReference type="ChEBI" id="CHEBI:29105"/>
    </ligand>
</feature>
<feature type="binding site" evidence="3">
    <location>
        <begin position="209"/>
        <end position="211"/>
    </location>
    <ligand>
        <name>NAD(+)</name>
        <dbReference type="ChEBI" id="CHEBI:57540"/>
    </ligand>
</feature>
<feature type="binding site" evidence="3">
    <location>
        <begin position="235"/>
        <end position="237"/>
    </location>
    <ligand>
        <name>NAD(+)</name>
        <dbReference type="ChEBI" id="CHEBI:57540"/>
    </ligand>
</feature>
<feature type="binding site" evidence="3">
    <location>
        <position position="253"/>
    </location>
    <ligand>
        <name>NAD(+)</name>
        <dbReference type="ChEBI" id="CHEBI:57540"/>
    </ligand>
</feature>
<feature type="sequence conflict" description="In Ref. 4; AAP68206 and 5; BAE99436." evidence="8" ref="4 5">
    <original>D</original>
    <variation>G</variation>
    <location>
        <position position="14"/>
    </location>
</feature>
<reference key="1">
    <citation type="submission" date="2000-06" db="EMBL/GenBank/DDBJ databases">
        <title>Molecular cloning and characterization of sir2 homolog in Arabidopsis thaliana.</title>
        <authorList>
            <person name="Adachi Y."/>
            <person name="Oguchi K."/>
            <person name="Tamura K."/>
            <person name="Takahashi H."/>
        </authorList>
    </citation>
    <scope>NUCLEOTIDE SEQUENCE [MRNA]</scope>
    <source>
        <strain>cv. Columbia</strain>
    </source>
</reference>
<reference key="2">
    <citation type="journal article" date="1998" name="DNA Res.">
        <title>Structural analysis of Arabidopsis thaliana chromosome 5. IV. Sequence features of the regions of 1,456,315 bp covered by nineteen physically assigned P1 and TAC clones.</title>
        <authorList>
            <person name="Sato S."/>
            <person name="Kaneko T."/>
            <person name="Kotani H."/>
            <person name="Nakamura Y."/>
            <person name="Asamizu E."/>
            <person name="Miyajima N."/>
            <person name="Tabata S."/>
        </authorList>
    </citation>
    <scope>NUCLEOTIDE SEQUENCE [LARGE SCALE GENOMIC DNA]</scope>
    <source>
        <strain>cv. Columbia</strain>
    </source>
</reference>
<reference key="3">
    <citation type="journal article" date="2017" name="Plant J.">
        <title>Araport11: a complete reannotation of the Arabidopsis thaliana reference genome.</title>
        <authorList>
            <person name="Cheng C.Y."/>
            <person name="Krishnakumar V."/>
            <person name="Chan A.P."/>
            <person name="Thibaud-Nissen F."/>
            <person name="Schobel S."/>
            <person name="Town C.D."/>
        </authorList>
    </citation>
    <scope>GENOME REANNOTATION</scope>
    <source>
        <strain>cv. Columbia</strain>
    </source>
</reference>
<reference key="4">
    <citation type="journal article" date="2003" name="Science">
        <title>Empirical analysis of transcriptional activity in the Arabidopsis genome.</title>
        <authorList>
            <person name="Yamada K."/>
            <person name="Lim J."/>
            <person name="Dale J.M."/>
            <person name="Chen H."/>
            <person name="Shinn P."/>
            <person name="Palm C.J."/>
            <person name="Southwick A.M."/>
            <person name="Wu H.C."/>
            <person name="Kim C.J."/>
            <person name="Nguyen M."/>
            <person name="Pham P.K."/>
            <person name="Cheuk R.F."/>
            <person name="Karlin-Newmann G."/>
            <person name="Liu S.X."/>
            <person name="Lam B."/>
            <person name="Sakano H."/>
            <person name="Wu T."/>
            <person name="Yu G."/>
            <person name="Miranda M."/>
            <person name="Quach H.L."/>
            <person name="Tripp M."/>
            <person name="Chang C.H."/>
            <person name="Lee J.M."/>
            <person name="Toriumi M.J."/>
            <person name="Chan M.M."/>
            <person name="Tang C.C."/>
            <person name="Onodera C.S."/>
            <person name="Deng J.M."/>
            <person name="Akiyama K."/>
            <person name="Ansari Y."/>
            <person name="Arakawa T."/>
            <person name="Banh J."/>
            <person name="Banno F."/>
            <person name="Bowser L."/>
            <person name="Brooks S.Y."/>
            <person name="Carninci P."/>
            <person name="Chao Q."/>
            <person name="Choy N."/>
            <person name="Enju A."/>
            <person name="Goldsmith A.D."/>
            <person name="Gurjal M."/>
            <person name="Hansen N.F."/>
            <person name="Hayashizaki Y."/>
            <person name="Johnson-Hopson C."/>
            <person name="Hsuan V.W."/>
            <person name="Iida K."/>
            <person name="Karnes M."/>
            <person name="Khan S."/>
            <person name="Koesema E."/>
            <person name="Ishida J."/>
            <person name="Jiang P.X."/>
            <person name="Jones T."/>
            <person name="Kawai J."/>
            <person name="Kamiya A."/>
            <person name="Meyers C."/>
            <person name="Nakajima M."/>
            <person name="Narusaka M."/>
            <person name="Seki M."/>
            <person name="Sakurai T."/>
            <person name="Satou M."/>
            <person name="Tamse R."/>
            <person name="Vaysberg M."/>
            <person name="Wallender E.K."/>
            <person name="Wong C."/>
            <person name="Yamamura Y."/>
            <person name="Yuan S."/>
            <person name="Shinozaki K."/>
            <person name="Davis R.W."/>
            <person name="Theologis A."/>
            <person name="Ecker J.R."/>
        </authorList>
    </citation>
    <scope>NUCLEOTIDE SEQUENCE [LARGE SCALE MRNA]</scope>
    <source>
        <strain>cv. Columbia</strain>
    </source>
</reference>
<reference key="5">
    <citation type="submission" date="2006-07" db="EMBL/GenBank/DDBJ databases">
        <title>Large-scale analysis of RIKEN Arabidopsis full-length (RAFL) cDNAs.</title>
        <authorList>
            <person name="Totoki Y."/>
            <person name="Seki M."/>
            <person name="Ishida J."/>
            <person name="Nakajima M."/>
            <person name="Enju A."/>
            <person name="Kamiya A."/>
            <person name="Narusaka M."/>
            <person name="Shin-i T."/>
            <person name="Nakagawa M."/>
            <person name="Sakamoto N."/>
            <person name="Oishi K."/>
            <person name="Kohara Y."/>
            <person name="Kobayashi M."/>
            <person name="Toyoda A."/>
            <person name="Sakaki Y."/>
            <person name="Sakurai T."/>
            <person name="Iida K."/>
            <person name="Akiyama K."/>
            <person name="Satou M."/>
            <person name="Toyoda T."/>
            <person name="Konagaya A."/>
            <person name="Carninci P."/>
            <person name="Kawai J."/>
            <person name="Hayashizaki Y."/>
            <person name="Shinozaki K."/>
        </authorList>
    </citation>
    <scope>NUCLEOTIDE SEQUENCE [LARGE SCALE MRNA]</scope>
    <source>
        <strain>cv. Columbia</strain>
    </source>
</reference>
<reference key="6">
    <citation type="journal article" date="2018" name="Plant Cell">
        <title>Histone deacetylases SRT1 and SRT2 interact with ENAP1 to mediate ethylene-induced transcriptional repression.</title>
        <authorList>
            <person name="Zhang F."/>
            <person name="Wang L."/>
            <person name="Ko E.E."/>
            <person name="Shao K."/>
            <person name="Qiao H."/>
        </authorList>
    </citation>
    <scope>FUNCTION</scope>
    <scope>DISRUPTION PHENOTYPE</scope>
    <scope>INTERACTION WITH ENAP1</scope>
    <source>
        <strain>cv. Columbia</strain>
    </source>
</reference>
<comment type="function">
    <text evidence="1 6">NAD-dependent protein deacetylase (By similarity). Has deacetylase activity towards H3K9Ac (By similarity). May have a function in the safeguard against genome instability and DNA damage to ensure plant cell growth (By similarity). Involved in responses to ethylene leading to the transcriptional repression of some ethylene-responsive genes via the regulation of histone acetylation H3K9Ac (PubMed:29298835).</text>
</comment>
<comment type="catalytic activity">
    <reaction evidence="4">
        <text>N(6)-acetyl-L-lysyl-[protein] + NAD(+) + H2O = 2''-O-acetyl-ADP-D-ribose + nicotinamide + L-lysyl-[protein]</text>
        <dbReference type="Rhea" id="RHEA:43636"/>
        <dbReference type="Rhea" id="RHEA-COMP:9752"/>
        <dbReference type="Rhea" id="RHEA-COMP:10731"/>
        <dbReference type="ChEBI" id="CHEBI:15377"/>
        <dbReference type="ChEBI" id="CHEBI:17154"/>
        <dbReference type="ChEBI" id="CHEBI:29969"/>
        <dbReference type="ChEBI" id="CHEBI:57540"/>
        <dbReference type="ChEBI" id="CHEBI:61930"/>
        <dbReference type="ChEBI" id="CHEBI:83767"/>
        <dbReference type="EC" id="2.3.1.286"/>
    </reaction>
</comment>
<comment type="cofactor">
    <cofactor evidence="3">
        <name>Zn(2+)</name>
        <dbReference type="ChEBI" id="CHEBI:29105"/>
    </cofactor>
    <text evidence="3">Binds 1 zinc ion per subunit.</text>
</comment>
<comment type="subunit">
    <text evidence="2 6">Binds to the promoter region of genes influenced by ethylene (By similarity). Interacts with ENAP1; this interaction is enhanced in the presence of ethylene (PubMed:29298835).</text>
</comment>
<comment type="subcellular location">
    <subcellularLocation>
        <location evidence="1">Nucleus</location>
    </subcellularLocation>
</comment>
<comment type="disruption phenotype">
    <text evidence="6">Reduced ethylene sensitivity in the double mutant srt1 srt2.</text>
</comment>
<comment type="similarity">
    <text evidence="8">Belongs to the sirtuin family. Class IV subfamily.</text>
</comment>